<comment type="function">
    <text evidence="1">Catalyzes the condensation reaction of fatty acid synthesis by the addition to an acyl acceptor of two carbons from malonyl-ACP. Catalyzes the first condensation reaction which initiates fatty acid synthesis and may therefore play a role in governing the total rate of fatty acid production. Possesses both acetoacetyl-ACP synthase and acetyl transacylase activities. Its substrate specificity determines the biosynthesis of branched-chain and/or straight-chain of fatty acids.</text>
</comment>
<comment type="catalytic activity">
    <reaction evidence="1">
        <text>malonyl-[ACP] + acetyl-CoA + H(+) = 3-oxobutanoyl-[ACP] + CO2 + CoA</text>
        <dbReference type="Rhea" id="RHEA:12080"/>
        <dbReference type="Rhea" id="RHEA-COMP:9623"/>
        <dbReference type="Rhea" id="RHEA-COMP:9625"/>
        <dbReference type="ChEBI" id="CHEBI:15378"/>
        <dbReference type="ChEBI" id="CHEBI:16526"/>
        <dbReference type="ChEBI" id="CHEBI:57287"/>
        <dbReference type="ChEBI" id="CHEBI:57288"/>
        <dbReference type="ChEBI" id="CHEBI:78449"/>
        <dbReference type="ChEBI" id="CHEBI:78450"/>
        <dbReference type="EC" id="2.3.1.180"/>
    </reaction>
</comment>
<comment type="pathway">
    <text evidence="1">Lipid metabolism; fatty acid biosynthesis.</text>
</comment>
<comment type="subunit">
    <text evidence="1">Homodimer.</text>
</comment>
<comment type="subcellular location">
    <subcellularLocation>
        <location evidence="1">Cytoplasm</location>
    </subcellularLocation>
</comment>
<comment type="domain">
    <text evidence="1">The last Arg residue of the ACP-binding site is essential for the weak association between ACP/AcpP and FabH.</text>
</comment>
<comment type="similarity">
    <text evidence="1">Belongs to the thiolase-like superfamily. FabH family.</text>
</comment>
<dbReference type="EC" id="2.3.1.180" evidence="1"/>
<dbReference type="EMBL" id="CP000524">
    <property type="protein sequence ID" value="ABM45195.1"/>
    <property type="molecule type" value="Genomic_DNA"/>
</dbReference>
<dbReference type="RefSeq" id="WP_005766851.1">
    <property type="nucleotide sequence ID" value="NC_008783.1"/>
</dbReference>
<dbReference type="SMR" id="A1USI9"/>
<dbReference type="STRING" id="360095.BARBAKC583_0638"/>
<dbReference type="GeneID" id="4684326"/>
<dbReference type="KEGG" id="bbk:BARBAKC583_0638"/>
<dbReference type="PATRIC" id="fig|360095.6.peg.622"/>
<dbReference type="eggNOG" id="COG0332">
    <property type="taxonomic scope" value="Bacteria"/>
</dbReference>
<dbReference type="HOGENOM" id="CLU_039592_3_1_5"/>
<dbReference type="OrthoDB" id="9815506at2"/>
<dbReference type="UniPathway" id="UPA00094"/>
<dbReference type="Proteomes" id="UP000000643">
    <property type="component" value="Chromosome"/>
</dbReference>
<dbReference type="GO" id="GO:0005737">
    <property type="term" value="C:cytoplasm"/>
    <property type="evidence" value="ECO:0007669"/>
    <property type="project" value="UniProtKB-SubCell"/>
</dbReference>
<dbReference type="GO" id="GO:0004315">
    <property type="term" value="F:3-oxoacyl-[acyl-carrier-protein] synthase activity"/>
    <property type="evidence" value="ECO:0007669"/>
    <property type="project" value="InterPro"/>
</dbReference>
<dbReference type="GO" id="GO:0033818">
    <property type="term" value="F:beta-ketoacyl-acyl-carrier-protein synthase III activity"/>
    <property type="evidence" value="ECO:0007669"/>
    <property type="project" value="UniProtKB-UniRule"/>
</dbReference>
<dbReference type="GO" id="GO:0006633">
    <property type="term" value="P:fatty acid biosynthetic process"/>
    <property type="evidence" value="ECO:0007669"/>
    <property type="project" value="UniProtKB-UniRule"/>
</dbReference>
<dbReference type="CDD" id="cd00830">
    <property type="entry name" value="KAS_III"/>
    <property type="match status" value="1"/>
</dbReference>
<dbReference type="FunFam" id="3.40.47.10:FF:000004">
    <property type="entry name" value="3-oxoacyl-[acyl-carrier-protein] synthase 3"/>
    <property type="match status" value="1"/>
</dbReference>
<dbReference type="Gene3D" id="3.40.47.10">
    <property type="match status" value="1"/>
</dbReference>
<dbReference type="HAMAP" id="MF_01815">
    <property type="entry name" value="FabH"/>
    <property type="match status" value="1"/>
</dbReference>
<dbReference type="InterPro" id="IPR013747">
    <property type="entry name" value="ACP_syn_III_C"/>
</dbReference>
<dbReference type="InterPro" id="IPR013751">
    <property type="entry name" value="ACP_syn_III_N"/>
</dbReference>
<dbReference type="InterPro" id="IPR004655">
    <property type="entry name" value="FabH"/>
</dbReference>
<dbReference type="InterPro" id="IPR016039">
    <property type="entry name" value="Thiolase-like"/>
</dbReference>
<dbReference type="NCBIfam" id="TIGR00747">
    <property type="entry name" value="fabH"/>
    <property type="match status" value="1"/>
</dbReference>
<dbReference type="NCBIfam" id="NF006829">
    <property type="entry name" value="PRK09352.1"/>
    <property type="match status" value="1"/>
</dbReference>
<dbReference type="PANTHER" id="PTHR43091">
    <property type="entry name" value="3-OXOACYL-[ACYL-CARRIER-PROTEIN] SYNTHASE"/>
    <property type="match status" value="1"/>
</dbReference>
<dbReference type="PANTHER" id="PTHR43091:SF1">
    <property type="entry name" value="BETA-KETOACYL-[ACYL-CARRIER-PROTEIN] SYNTHASE III, CHLOROPLASTIC"/>
    <property type="match status" value="1"/>
</dbReference>
<dbReference type="Pfam" id="PF08545">
    <property type="entry name" value="ACP_syn_III"/>
    <property type="match status" value="1"/>
</dbReference>
<dbReference type="Pfam" id="PF08541">
    <property type="entry name" value="ACP_syn_III_C"/>
    <property type="match status" value="1"/>
</dbReference>
<dbReference type="SUPFAM" id="SSF53901">
    <property type="entry name" value="Thiolase-like"/>
    <property type="match status" value="1"/>
</dbReference>
<sequence length="324" mass="34741">MIRSVMCGVGSALPKKKLSNDEIAKFVETSDSWIVQRTGIHQRYIASENETTVSLGIEAAQVALTNAGMTIKDIDCIILATSTPNRTFPSSAVEIQHALGMSHGFSFDVQAVCSGFIFALTIGDVYLRSGEAKRVLVIGSETFSRILDWKDRTTCVLFGDGAGAAILEAREVEGNVAIDRGILSTKLRSNGAHIDKLYADGGPSTTQTIGYLRMKGQEVFKHAVGIVTDVIDDCFAAVGMNPSQLDWFVPHQANKRIIEASAKKLGIKTDKVVITVDQHGNTSAASVPLALATAVQDGRIKEGDLVLLEAMGGGFTWGAVLIRW</sequence>
<name>FABH_BARBK</name>
<accession>A1USI9</accession>
<reference key="1">
    <citation type="submission" date="2006-12" db="EMBL/GenBank/DDBJ databases">
        <authorList>
            <person name="Hendrix L."/>
            <person name="Mohamoud Y."/>
            <person name="Radune D."/>
            <person name="Shvartsbeyn A."/>
            <person name="Daugherty S."/>
            <person name="Dodson R."/>
            <person name="Durkin A.S."/>
            <person name="Harkins D."/>
            <person name="Huot H."/>
            <person name="Kothari S.P."/>
            <person name="Madupu R."/>
            <person name="Li J."/>
            <person name="Nelson W.C."/>
            <person name="Shrivastava S."/>
            <person name="Giglio M.G."/>
            <person name="Haft D."/>
            <person name="Selengut J."/>
            <person name="Fraser-Ligget C."/>
            <person name="Seshadri R."/>
        </authorList>
    </citation>
    <scope>NUCLEOTIDE SEQUENCE [LARGE SCALE GENOMIC DNA]</scope>
    <source>
        <strain>ATCC 35685 / KC583 / Herrer 020/F12,63</strain>
    </source>
</reference>
<evidence type="ECO:0000255" key="1">
    <source>
        <dbReference type="HAMAP-Rule" id="MF_01815"/>
    </source>
</evidence>
<keyword id="KW-0012">Acyltransferase</keyword>
<keyword id="KW-0963">Cytoplasm</keyword>
<keyword id="KW-0275">Fatty acid biosynthesis</keyword>
<keyword id="KW-0276">Fatty acid metabolism</keyword>
<keyword id="KW-0444">Lipid biosynthesis</keyword>
<keyword id="KW-0443">Lipid metabolism</keyword>
<keyword id="KW-0511">Multifunctional enzyme</keyword>
<keyword id="KW-0808">Transferase</keyword>
<organism>
    <name type="scientific">Bartonella bacilliformis (strain ATCC 35685 / KC583 / Herrer 020/F12,63)</name>
    <dbReference type="NCBI Taxonomy" id="360095"/>
    <lineage>
        <taxon>Bacteria</taxon>
        <taxon>Pseudomonadati</taxon>
        <taxon>Pseudomonadota</taxon>
        <taxon>Alphaproteobacteria</taxon>
        <taxon>Hyphomicrobiales</taxon>
        <taxon>Bartonellaceae</taxon>
        <taxon>Bartonella</taxon>
    </lineage>
</organism>
<proteinExistence type="inferred from homology"/>
<protein>
    <recommendedName>
        <fullName evidence="1">Beta-ketoacyl-[acyl-carrier-protein] synthase III</fullName>
        <shortName evidence="1">Beta-ketoacyl-ACP synthase III</shortName>
        <shortName evidence="1">KAS III</shortName>
        <ecNumber evidence="1">2.3.1.180</ecNumber>
    </recommendedName>
    <alternativeName>
        <fullName evidence="1">3-oxoacyl-[acyl-carrier-protein] synthase 3</fullName>
    </alternativeName>
    <alternativeName>
        <fullName evidence="1">3-oxoacyl-[acyl-carrier-protein] synthase III</fullName>
    </alternativeName>
</protein>
<gene>
    <name evidence="1" type="primary">fabH</name>
    <name type="ordered locus">BARBAKC583_0638</name>
</gene>
<feature type="chain" id="PRO_1000187841" description="Beta-ketoacyl-[acyl-carrier-protein] synthase III">
    <location>
        <begin position="1"/>
        <end position="324"/>
    </location>
</feature>
<feature type="region of interest" description="ACP-binding" evidence="1">
    <location>
        <begin position="252"/>
        <end position="256"/>
    </location>
</feature>
<feature type="active site" evidence="1">
    <location>
        <position position="113"/>
    </location>
</feature>
<feature type="active site" evidence="1">
    <location>
        <position position="251"/>
    </location>
</feature>
<feature type="active site" evidence="1">
    <location>
        <position position="281"/>
    </location>
</feature>